<sequence>MIGLLLGLIYYIPALVANGSAPFIKSGTPIDFKRKLNDGRRVLGDGKTFEGLLLSLTFGTTVGAIISRFLGIEWIIIGFVESLGAMLGDMLGAFIKRRIGLERGARAPILDQLDFILGATVVLISFNVNLNIYQVVFVCVLVIALHMFTNYVAYRLKIKSVPW</sequence>
<protein>
    <recommendedName>
        <fullName evidence="1">CDP-archaeol synthase</fullName>
        <ecNumber evidence="1">2.7.7.67</ecNumber>
    </recommendedName>
    <alternativeName>
        <fullName evidence="1">CDP-2,3-bis-(O-geranylgeranyl)-sn-glycerol synthase</fullName>
    </alternativeName>
</protein>
<comment type="function">
    <text evidence="1">Catalyzes the formation of CDP-2,3-bis-(O-geranylgeranyl)-sn-glycerol (CDP-archaeol) from 2,3-bis-(O-geranylgeranyl)-sn-glycerol 1-phosphate (DGGGP) and CTP. This reaction is the third ether-bond-formation step in the biosynthesis of archaeal membrane lipids.</text>
</comment>
<comment type="catalytic activity">
    <reaction evidence="1">
        <text>2,3-bis-O-(geranylgeranyl)-sn-glycerol 1-phosphate + CTP + H(+) = CDP-2,3-bis-O-(geranylgeranyl)-sn-glycerol + diphosphate</text>
        <dbReference type="Rhea" id="RHEA:25690"/>
        <dbReference type="ChEBI" id="CHEBI:15378"/>
        <dbReference type="ChEBI" id="CHEBI:33019"/>
        <dbReference type="ChEBI" id="CHEBI:37563"/>
        <dbReference type="ChEBI" id="CHEBI:58837"/>
        <dbReference type="ChEBI" id="CHEBI:58838"/>
        <dbReference type="EC" id="2.7.7.67"/>
    </reaction>
</comment>
<comment type="cofactor">
    <cofactor evidence="1">
        <name>Mg(2+)</name>
        <dbReference type="ChEBI" id="CHEBI:18420"/>
    </cofactor>
</comment>
<comment type="pathway">
    <text evidence="1">Membrane lipid metabolism; glycerophospholipid metabolism.</text>
</comment>
<comment type="subcellular location">
    <subcellularLocation>
        <location evidence="1">Cell membrane</location>
        <topology evidence="1">Multi-pass membrane protein</topology>
    </subcellularLocation>
</comment>
<comment type="similarity">
    <text evidence="1">Belongs to the CDP-archaeol synthase family.</text>
</comment>
<feature type="chain" id="PRO_0000094179" description="CDP-archaeol synthase">
    <location>
        <begin position="1"/>
        <end position="163"/>
    </location>
</feature>
<feature type="transmembrane region" description="Helical" evidence="1">
    <location>
        <begin position="4"/>
        <end position="24"/>
    </location>
</feature>
<feature type="transmembrane region" description="Helical" evidence="1">
    <location>
        <begin position="52"/>
        <end position="72"/>
    </location>
</feature>
<feature type="transmembrane region" description="Helical" evidence="1">
    <location>
        <begin position="75"/>
        <end position="95"/>
    </location>
</feature>
<feature type="transmembrane region" description="Helical" evidence="1">
    <location>
        <begin position="107"/>
        <end position="127"/>
    </location>
</feature>
<feature type="transmembrane region" description="Helical" evidence="1">
    <location>
        <begin position="128"/>
        <end position="148"/>
    </location>
</feature>
<organism>
    <name type="scientific">Sulfolobus acidocaldarius (strain ATCC 33909 / DSM 639 / JCM 8929 / NBRC 15157 / NCIMB 11770)</name>
    <dbReference type="NCBI Taxonomy" id="330779"/>
    <lineage>
        <taxon>Archaea</taxon>
        <taxon>Thermoproteota</taxon>
        <taxon>Thermoprotei</taxon>
        <taxon>Sulfolobales</taxon>
        <taxon>Sulfolobaceae</taxon>
        <taxon>Sulfolobus</taxon>
    </lineage>
</organism>
<reference key="1">
    <citation type="journal article" date="2005" name="J. Bacteriol.">
        <title>The genome of Sulfolobus acidocaldarius, a model organism of the Crenarchaeota.</title>
        <authorList>
            <person name="Chen L."/>
            <person name="Bruegger K."/>
            <person name="Skovgaard M."/>
            <person name="Redder P."/>
            <person name="She Q."/>
            <person name="Torarinsson E."/>
            <person name="Greve B."/>
            <person name="Awayez M."/>
            <person name="Zibat A."/>
            <person name="Klenk H.-P."/>
            <person name="Garrett R.A."/>
        </authorList>
    </citation>
    <scope>NUCLEOTIDE SEQUENCE [LARGE SCALE GENOMIC DNA]</scope>
    <source>
        <strain>ATCC 33909 / DSM 639 / JCM 8929 / NBRC 15157 / NCIMB 11770</strain>
    </source>
</reference>
<dbReference type="EC" id="2.7.7.67" evidence="1"/>
<dbReference type="EMBL" id="CP000077">
    <property type="protein sequence ID" value="AAY80260.1"/>
    <property type="molecule type" value="Genomic_DNA"/>
</dbReference>
<dbReference type="SMR" id="Q4JAC0"/>
<dbReference type="STRING" id="330779.Saci_0897"/>
<dbReference type="KEGG" id="sai:Saci_0897"/>
<dbReference type="PATRIC" id="fig|330779.12.peg.857"/>
<dbReference type="eggNOG" id="arCOG04106">
    <property type="taxonomic scope" value="Archaea"/>
</dbReference>
<dbReference type="HOGENOM" id="CLU_105710_0_0_2"/>
<dbReference type="UniPathway" id="UPA00940"/>
<dbReference type="Proteomes" id="UP000001018">
    <property type="component" value="Chromosome"/>
</dbReference>
<dbReference type="GO" id="GO:0005886">
    <property type="term" value="C:plasma membrane"/>
    <property type="evidence" value="ECO:0007669"/>
    <property type="project" value="UniProtKB-SubCell"/>
</dbReference>
<dbReference type="GO" id="GO:0043338">
    <property type="term" value="F:CDP-2,3-bis-(O-geranylgeranyl)-sn-glycerol synthase activity"/>
    <property type="evidence" value="ECO:0007669"/>
    <property type="project" value="UniProtKB-EC"/>
</dbReference>
<dbReference type="GO" id="GO:0046474">
    <property type="term" value="P:glycerophospholipid biosynthetic process"/>
    <property type="evidence" value="ECO:0007669"/>
    <property type="project" value="UniProtKB-UniRule"/>
</dbReference>
<dbReference type="HAMAP" id="MF_01117">
    <property type="entry name" value="CDP_archaeol_synth"/>
    <property type="match status" value="1"/>
</dbReference>
<dbReference type="InterPro" id="IPR032690">
    <property type="entry name" value="CarS"/>
</dbReference>
<dbReference type="InterPro" id="IPR002726">
    <property type="entry name" value="CarS_archaea"/>
</dbReference>
<dbReference type="NCBIfam" id="NF003114">
    <property type="entry name" value="PRK04032.1"/>
    <property type="match status" value="1"/>
</dbReference>
<dbReference type="PANTHER" id="PTHR39650">
    <property type="entry name" value="CDP-ARCHAEOL SYNTHASE"/>
    <property type="match status" value="1"/>
</dbReference>
<dbReference type="PANTHER" id="PTHR39650:SF1">
    <property type="entry name" value="CDP-ARCHAEOL SYNTHASE"/>
    <property type="match status" value="1"/>
</dbReference>
<dbReference type="Pfam" id="PF01864">
    <property type="entry name" value="CarS-like"/>
    <property type="match status" value="1"/>
</dbReference>
<gene>
    <name evidence="1" type="primary">carS</name>
    <name type="ordered locus">Saci_0897</name>
</gene>
<proteinExistence type="inferred from homology"/>
<keyword id="KW-1003">Cell membrane</keyword>
<keyword id="KW-0444">Lipid biosynthesis</keyword>
<keyword id="KW-0443">Lipid metabolism</keyword>
<keyword id="KW-0460">Magnesium</keyword>
<keyword id="KW-0472">Membrane</keyword>
<keyword id="KW-0594">Phospholipid biosynthesis</keyword>
<keyword id="KW-1208">Phospholipid metabolism</keyword>
<keyword id="KW-1185">Reference proteome</keyword>
<keyword id="KW-0808">Transferase</keyword>
<keyword id="KW-0812">Transmembrane</keyword>
<keyword id="KW-1133">Transmembrane helix</keyword>
<evidence type="ECO:0000255" key="1">
    <source>
        <dbReference type="HAMAP-Rule" id="MF_01117"/>
    </source>
</evidence>
<name>CDPAS_SULAC</name>
<accession>Q4JAC0</accession>